<comment type="function">
    <text evidence="1">Binds together with bS18 to 16S ribosomal RNA.</text>
</comment>
<comment type="similarity">
    <text evidence="2">Belongs to the bacterial ribosomal protein bS6 family.</text>
</comment>
<sequence length="160" mass="18722">MAKYEIMLVVRGDLDQEQANKVANELKATLKNTEVKENNYDGVQQLAYEINKLKTAYRYVYNFETTDVSLINEFRRLAIINKNVLRHIIINLEKDYGYKATVNTKKVQRNEKRAEVYARQKEEAERRAVERQAAYEAMKAEREAAGLPVKEFVKNTNSKR</sequence>
<organism>
    <name type="scientific">Ureaplasma parvum serovar 3 (strain ATCC 700970)</name>
    <dbReference type="NCBI Taxonomy" id="273119"/>
    <lineage>
        <taxon>Bacteria</taxon>
        <taxon>Bacillati</taxon>
        <taxon>Mycoplasmatota</taxon>
        <taxon>Mycoplasmoidales</taxon>
        <taxon>Mycoplasmoidaceae</taxon>
        <taxon>Ureaplasma</taxon>
    </lineage>
</organism>
<keyword id="KW-1185">Reference proteome</keyword>
<keyword id="KW-0687">Ribonucleoprotein</keyword>
<keyword id="KW-0689">Ribosomal protein</keyword>
<keyword id="KW-0694">RNA-binding</keyword>
<keyword id="KW-0699">rRNA-binding</keyword>
<evidence type="ECO:0000250" key="1"/>
<evidence type="ECO:0000305" key="2"/>
<feature type="chain" id="PRO_0000176870" description="Small ribosomal subunit protein bS6">
    <location>
        <begin position="1"/>
        <end position="160"/>
    </location>
</feature>
<reference key="1">
    <citation type="journal article" date="2000" name="Nature">
        <title>The complete sequence of the mucosal pathogen Ureaplasma urealyticum.</title>
        <authorList>
            <person name="Glass J.I."/>
            <person name="Lefkowitz E.J."/>
            <person name="Glass J.S."/>
            <person name="Heiner C.R."/>
            <person name="Chen E.Y."/>
            <person name="Cassell G.H."/>
        </authorList>
    </citation>
    <scope>NUCLEOTIDE SEQUENCE [LARGE SCALE GENOMIC DNA]</scope>
    <source>
        <strain>ATCC 700970</strain>
    </source>
</reference>
<accession>Q9PPT6</accession>
<proteinExistence type="inferred from homology"/>
<name>RS6_UREPA</name>
<protein>
    <recommendedName>
        <fullName evidence="2">Small ribosomal subunit protein bS6</fullName>
    </recommendedName>
    <alternativeName>
        <fullName>30S ribosomal protein S6</fullName>
    </alternativeName>
</protein>
<dbReference type="EMBL" id="AF222894">
    <property type="protein sequence ID" value="AAF30967.1"/>
    <property type="molecule type" value="Genomic_DNA"/>
</dbReference>
<dbReference type="RefSeq" id="WP_006688782.1">
    <property type="nucleotide sequence ID" value="NC_002162.1"/>
</dbReference>
<dbReference type="SMR" id="Q9PPT6"/>
<dbReference type="STRING" id="273119.UU554"/>
<dbReference type="EnsemblBacteria" id="AAF30967">
    <property type="protein sequence ID" value="AAF30967"/>
    <property type="gene ID" value="UU554"/>
</dbReference>
<dbReference type="GeneID" id="29672549"/>
<dbReference type="KEGG" id="uur:UU554"/>
<dbReference type="eggNOG" id="COG0360">
    <property type="taxonomic scope" value="Bacteria"/>
</dbReference>
<dbReference type="HOGENOM" id="CLU_139827_0_0_14"/>
<dbReference type="OrthoDB" id="397558at2"/>
<dbReference type="Proteomes" id="UP000000423">
    <property type="component" value="Chromosome"/>
</dbReference>
<dbReference type="GO" id="GO:1990904">
    <property type="term" value="C:ribonucleoprotein complex"/>
    <property type="evidence" value="ECO:0007669"/>
    <property type="project" value="UniProtKB-KW"/>
</dbReference>
<dbReference type="GO" id="GO:0005840">
    <property type="term" value="C:ribosome"/>
    <property type="evidence" value="ECO:0007669"/>
    <property type="project" value="UniProtKB-KW"/>
</dbReference>
<dbReference type="GO" id="GO:0019843">
    <property type="term" value="F:rRNA binding"/>
    <property type="evidence" value="ECO:0007669"/>
    <property type="project" value="UniProtKB-UniRule"/>
</dbReference>
<dbReference type="GO" id="GO:0003735">
    <property type="term" value="F:structural constituent of ribosome"/>
    <property type="evidence" value="ECO:0007669"/>
    <property type="project" value="InterPro"/>
</dbReference>
<dbReference type="GO" id="GO:0006412">
    <property type="term" value="P:translation"/>
    <property type="evidence" value="ECO:0007669"/>
    <property type="project" value="UniProtKB-UniRule"/>
</dbReference>
<dbReference type="CDD" id="cd00473">
    <property type="entry name" value="bS6"/>
    <property type="match status" value="1"/>
</dbReference>
<dbReference type="Gene3D" id="3.30.70.60">
    <property type="match status" value="1"/>
</dbReference>
<dbReference type="HAMAP" id="MF_00360">
    <property type="entry name" value="Ribosomal_bS6"/>
    <property type="match status" value="1"/>
</dbReference>
<dbReference type="InterPro" id="IPR000529">
    <property type="entry name" value="Ribosomal_bS6"/>
</dbReference>
<dbReference type="InterPro" id="IPR035980">
    <property type="entry name" value="Ribosomal_bS6_sf"/>
</dbReference>
<dbReference type="InterPro" id="IPR020814">
    <property type="entry name" value="Ribosomal_S6_plastid/chlpt"/>
</dbReference>
<dbReference type="InterPro" id="IPR014717">
    <property type="entry name" value="Transl_elong_EF1B/ribsomal_bS6"/>
</dbReference>
<dbReference type="NCBIfam" id="TIGR00166">
    <property type="entry name" value="S6"/>
    <property type="match status" value="1"/>
</dbReference>
<dbReference type="Pfam" id="PF01250">
    <property type="entry name" value="Ribosomal_S6"/>
    <property type="match status" value="1"/>
</dbReference>
<dbReference type="SUPFAM" id="SSF54995">
    <property type="entry name" value="Ribosomal protein S6"/>
    <property type="match status" value="1"/>
</dbReference>
<gene>
    <name type="primary">rpsF</name>
    <name type="synonym">rps6</name>
    <name type="ordered locus">UU554</name>
</gene>